<evidence type="ECO:0000255" key="1">
    <source>
        <dbReference type="HAMAP-Rule" id="MF_00004"/>
    </source>
</evidence>
<keyword id="KW-0963">Cytoplasm</keyword>
<keyword id="KW-0328">Glycosyltransferase</keyword>
<keyword id="KW-0660">Purine salvage</keyword>
<keyword id="KW-1185">Reference proteome</keyword>
<keyword id="KW-0808">Transferase</keyword>
<comment type="function">
    <text evidence="1">Catalyzes a salvage reaction resulting in the formation of AMP, that is energically less costly than de novo synthesis.</text>
</comment>
<comment type="catalytic activity">
    <reaction evidence="1">
        <text>AMP + diphosphate = 5-phospho-alpha-D-ribose 1-diphosphate + adenine</text>
        <dbReference type="Rhea" id="RHEA:16609"/>
        <dbReference type="ChEBI" id="CHEBI:16708"/>
        <dbReference type="ChEBI" id="CHEBI:33019"/>
        <dbReference type="ChEBI" id="CHEBI:58017"/>
        <dbReference type="ChEBI" id="CHEBI:456215"/>
        <dbReference type="EC" id="2.4.2.7"/>
    </reaction>
</comment>
<comment type="pathway">
    <text evidence="1">Purine metabolism; AMP biosynthesis via salvage pathway; AMP from adenine: step 1/1.</text>
</comment>
<comment type="subunit">
    <text evidence="1">Homodimer.</text>
</comment>
<comment type="subcellular location">
    <subcellularLocation>
        <location evidence="1">Cytoplasm</location>
    </subcellularLocation>
</comment>
<comment type="similarity">
    <text evidence="1">Belongs to the purine/pyrimidine phosphoribosyltransferase family.</text>
</comment>
<accession>Q5WHQ1</accession>
<feature type="chain" id="PRO_0000149353" description="Adenine phosphoribosyltransferase">
    <location>
        <begin position="1"/>
        <end position="171"/>
    </location>
</feature>
<sequence>MDYKQYITIVEDWPQEGIRFKDITTLMQNGTAYKRAVEELAVYAKEKQADVIVGPEARGFVVGCPIATELEIGFVPVRKKGKLPREVIEANYGLEYGKDCLTIHKDSIQPGQRVVITDDLLATGGTIEATAKMVEQLGGKVVGIAFLIELAYIGGRDKLKQYDLFSLMSYE</sequence>
<name>APT_SHOC1</name>
<protein>
    <recommendedName>
        <fullName evidence="1">Adenine phosphoribosyltransferase</fullName>
        <shortName evidence="1">APRT</shortName>
        <ecNumber evidence="1">2.4.2.7</ecNumber>
    </recommendedName>
</protein>
<dbReference type="EC" id="2.4.2.7" evidence="1"/>
<dbReference type="EMBL" id="AP006627">
    <property type="protein sequence ID" value="BAD64104.1"/>
    <property type="molecule type" value="Genomic_DNA"/>
</dbReference>
<dbReference type="RefSeq" id="WP_011246413.1">
    <property type="nucleotide sequence ID" value="NC_006582.1"/>
</dbReference>
<dbReference type="SMR" id="Q5WHQ1"/>
<dbReference type="STRING" id="66692.ABC1569"/>
<dbReference type="KEGG" id="bcl:ABC1569"/>
<dbReference type="eggNOG" id="COG0503">
    <property type="taxonomic scope" value="Bacteria"/>
</dbReference>
<dbReference type="HOGENOM" id="CLU_063339_3_0_9"/>
<dbReference type="OrthoDB" id="9803963at2"/>
<dbReference type="UniPathway" id="UPA00588">
    <property type="reaction ID" value="UER00646"/>
</dbReference>
<dbReference type="Proteomes" id="UP000001168">
    <property type="component" value="Chromosome"/>
</dbReference>
<dbReference type="GO" id="GO:0005737">
    <property type="term" value="C:cytoplasm"/>
    <property type="evidence" value="ECO:0007669"/>
    <property type="project" value="UniProtKB-SubCell"/>
</dbReference>
<dbReference type="GO" id="GO:0002055">
    <property type="term" value="F:adenine binding"/>
    <property type="evidence" value="ECO:0007669"/>
    <property type="project" value="TreeGrafter"/>
</dbReference>
<dbReference type="GO" id="GO:0003999">
    <property type="term" value="F:adenine phosphoribosyltransferase activity"/>
    <property type="evidence" value="ECO:0007669"/>
    <property type="project" value="UniProtKB-UniRule"/>
</dbReference>
<dbReference type="GO" id="GO:0016208">
    <property type="term" value="F:AMP binding"/>
    <property type="evidence" value="ECO:0007669"/>
    <property type="project" value="TreeGrafter"/>
</dbReference>
<dbReference type="GO" id="GO:0006168">
    <property type="term" value="P:adenine salvage"/>
    <property type="evidence" value="ECO:0007669"/>
    <property type="project" value="InterPro"/>
</dbReference>
<dbReference type="GO" id="GO:0044209">
    <property type="term" value="P:AMP salvage"/>
    <property type="evidence" value="ECO:0007669"/>
    <property type="project" value="UniProtKB-UniRule"/>
</dbReference>
<dbReference type="GO" id="GO:0006166">
    <property type="term" value="P:purine ribonucleoside salvage"/>
    <property type="evidence" value="ECO:0007669"/>
    <property type="project" value="UniProtKB-KW"/>
</dbReference>
<dbReference type="CDD" id="cd06223">
    <property type="entry name" value="PRTases_typeI"/>
    <property type="match status" value="1"/>
</dbReference>
<dbReference type="FunFam" id="3.40.50.2020:FF:000004">
    <property type="entry name" value="Adenine phosphoribosyltransferase"/>
    <property type="match status" value="1"/>
</dbReference>
<dbReference type="Gene3D" id="3.40.50.2020">
    <property type="match status" value="1"/>
</dbReference>
<dbReference type="HAMAP" id="MF_00004">
    <property type="entry name" value="Aden_phosphoribosyltr"/>
    <property type="match status" value="1"/>
</dbReference>
<dbReference type="InterPro" id="IPR005764">
    <property type="entry name" value="Ade_phspho_trans"/>
</dbReference>
<dbReference type="InterPro" id="IPR000836">
    <property type="entry name" value="PRibTrfase_dom"/>
</dbReference>
<dbReference type="InterPro" id="IPR029057">
    <property type="entry name" value="PRTase-like"/>
</dbReference>
<dbReference type="InterPro" id="IPR050054">
    <property type="entry name" value="UPRTase/APRTase"/>
</dbReference>
<dbReference type="NCBIfam" id="TIGR01090">
    <property type="entry name" value="apt"/>
    <property type="match status" value="1"/>
</dbReference>
<dbReference type="NCBIfam" id="NF002633">
    <property type="entry name" value="PRK02304.1-2"/>
    <property type="match status" value="1"/>
</dbReference>
<dbReference type="NCBIfam" id="NF002634">
    <property type="entry name" value="PRK02304.1-3"/>
    <property type="match status" value="1"/>
</dbReference>
<dbReference type="NCBIfam" id="NF002636">
    <property type="entry name" value="PRK02304.1-5"/>
    <property type="match status" value="1"/>
</dbReference>
<dbReference type="PANTHER" id="PTHR32315">
    <property type="entry name" value="ADENINE PHOSPHORIBOSYLTRANSFERASE"/>
    <property type="match status" value="1"/>
</dbReference>
<dbReference type="PANTHER" id="PTHR32315:SF3">
    <property type="entry name" value="ADENINE PHOSPHORIBOSYLTRANSFERASE"/>
    <property type="match status" value="1"/>
</dbReference>
<dbReference type="Pfam" id="PF00156">
    <property type="entry name" value="Pribosyltran"/>
    <property type="match status" value="1"/>
</dbReference>
<dbReference type="SUPFAM" id="SSF53271">
    <property type="entry name" value="PRTase-like"/>
    <property type="match status" value="1"/>
</dbReference>
<organism>
    <name type="scientific">Shouchella clausii (strain KSM-K16)</name>
    <name type="common">Alkalihalobacillus clausii</name>
    <dbReference type="NCBI Taxonomy" id="66692"/>
    <lineage>
        <taxon>Bacteria</taxon>
        <taxon>Bacillati</taxon>
        <taxon>Bacillota</taxon>
        <taxon>Bacilli</taxon>
        <taxon>Bacillales</taxon>
        <taxon>Bacillaceae</taxon>
        <taxon>Shouchella</taxon>
    </lineage>
</organism>
<gene>
    <name evidence="1" type="primary">apt</name>
    <name type="ordered locus">ABC1569</name>
</gene>
<reference key="1">
    <citation type="submission" date="2003-10" db="EMBL/GenBank/DDBJ databases">
        <title>The complete genome sequence of the alkaliphilic Bacillus clausii KSM-K16.</title>
        <authorList>
            <person name="Takaki Y."/>
            <person name="Kageyama Y."/>
            <person name="Shimamura S."/>
            <person name="Suzuki H."/>
            <person name="Nishi S."/>
            <person name="Hatada Y."/>
            <person name="Kawai S."/>
            <person name="Ito S."/>
            <person name="Horikoshi K."/>
        </authorList>
    </citation>
    <scope>NUCLEOTIDE SEQUENCE [LARGE SCALE GENOMIC DNA]</scope>
    <source>
        <strain>KSM-K16</strain>
    </source>
</reference>
<proteinExistence type="inferred from homology"/>